<protein>
    <recommendedName>
        <fullName>Cytochrome c oxidase subunit 2</fullName>
        <ecNumber>7.1.1.9</ecNumber>
    </recommendedName>
    <alternativeName>
        <fullName>Cytochrome c oxidase polypeptide II</fullName>
    </alternativeName>
</protein>
<sequence length="252" mass="28931">MFLIMLKGHILMDAPTPWGIFFQDSASPQMEGIMELHNNIMFYLAIILFTVTWMMITIIRNFVAKKSPIAHKYMNHGTLIELIWTITPAFILILIAFPSFKLLYLMDEVMDPSLVVYAEGHQWYWSYQYPDFTNEDNEFIEFDSYIVPESDLEEGQFRMLEVDNRVIIPELTHTAFVISADVIHSYACPSLGIKADAYPGRLNQASVYINGPGTFFGQCSEICGILHSSMNIAIQSVSIKDFLLWLRDQMEG</sequence>
<keyword id="KW-0186">Copper</keyword>
<keyword id="KW-0249">Electron transport</keyword>
<keyword id="KW-0460">Magnesium</keyword>
<keyword id="KW-0472">Membrane</keyword>
<keyword id="KW-0479">Metal-binding</keyword>
<keyword id="KW-0496">Mitochondrion</keyword>
<keyword id="KW-0999">Mitochondrion inner membrane</keyword>
<keyword id="KW-0679">Respiratory chain</keyword>
<keyword id="KW-1278">Translocase</keyword>
<keyword id="KW-0812">Transmembrane</keyword>
<keyword id="KW-1133">Transmembrane helix</keyword>
<keyword id="KW-0813">Transport</keyword>
<accession>P13588</accession>
<reference key="1">
    <citation type="journal article" date="1989" name="J. Mol. Biol.">
        <title>Processing of mitochondrial RNA in Aspergillus nidulans.</title>
        <authorList>
            <person name="Dyson N.J."/>
            <person name="Brown T.A."/>
            <person name="Ray J.A."/>
            <person name="Waring R.B."/>
            <person name="Scazzocchio C."/>
            <person name="Davies R.W."/>
        </authorList>
    </citation>
    <scope>NUCLEOTIDE SEQUENCE [GENOMIC DNA]</scope>
    <source>
        <strain>yA2 pyroA4 cnxC3</strain>
    </source>
</reference>
<geneLocation type="mitochondrion"/>
<evidence type="ECO:0000250" key="1">
    <source>
        <dbReference type="UniProtKB" id="P00410"/>
    </source>
</evidence>
<evidence type="ECO:0000255" key="2"/>
<evidence type="ECO:0000305" key="3"/>
<comment type="function">
    <text evidence="1">Component of the cytochrome c oxidase, the last enzyme in the mitochondrial electron transport chain which drives oxidative phosphorylation. The respiratory chain contains 3 multisubunit complexes succinate dehydrogenase (complex II, CII), ubiquinol-cytochrome c oxidoreductase (cytochrome b-c1 complex, complex III, CIII) and cytochrome c oxidase (complex IV, CIV), that cooperate to transfer electrons derived from NADH and succinate to molecular oxygen, creating an electrochemical gradient over the inner membrane that drives transmembrane transport and the ATP synthase. Cytochrome c oxidase is the component of the respiratory chain that catalyzes the reduction of oxygen to water. Electrons originating from reduced cytochrome c in the intermembrane space (IMS) are transferred via the dinuclear copper A center (CU(A)) of subunit 2 and heme A of subunit 1 to the active site in subunit 1, a binuclear center (BNC) formed by heme A3 and copper B (CU(B)). The BNC reduces molecular oxygen to 2 water molecules using 4 electrons from cytochrome c in the IMS and 4 protons from the mitochondrial matrix.</text>
</comment>
<comment type="catalytic activity">
    <reaction evidence="1">
        <text>4 Fe(II)-[cytochrome c] + O2 + 8 H(+)(in) = 4 Fe(III)-[cytochrome c] + 2 H2O + 4 H(+)(out)</text>
        <dbReference type="Rhea" id="RHEA:11436"/>
        <dbReference type="Rhea" id="RHEA-COMP:10350"/>
        <dbReference type="Rhea" id="RHEA-COMP:14399"/>
        <dbReference type="ChEBI" id="CHEBI:15377"/>
        <dbReference type="ChEBI" id="CHEBI:15378"/>
        <dbReference type="ChEBI" id="CHEBI:15379"/>
        <dbReference type="ChEBI" id="CHEBI:29033"/>
        <dbReference type="ChEBI" id="CHEBI:29034"/>
        <dbReference type="EC" id="7.1.1.9"/>
    </reaction>
    <physiologicalReaction direction="left-to-right" evidence="1">
        <dbReference type="Rhea" id="RHEA:11437"/>
    </physiologicalReaction>
</comment>
<comment type="cofactor">
    <cofactor evidence="1">
        <name>Cu cation</name>
        <dbReference type="ChEBI" id="CHEBI:23378"/>
    </cofactor>
    <text evidence="1">Binds a dinuclear copper A center per subunit.</text>
</comment>
<comment type="subunit">
    <text evidence="1">Component of the cytochrome c oxidase (complex IV, CIV), a multisubunit enzyme composed of a catalytic core of 3 subunits and several supernumerary subunits. The complex exists as a monomer or a dimer and forms supercomplexes (SCs) in the inner mitochondrial membrane with ubiquinol-cytochrome c oxidoreductase (cytochrome b-c1 complex, complex III, CIII).</text>
</comment>
<comment type="subcellular location">
    <subcellularLocation>
        <location evidence="1">Mitochondrion inner membrane</location>
        <topology evidence="1">Multi-pass membrane protein</topology>
    </subcellularLocation>
</comment>
<comment type="similarity">
    <text evidence="3">Belongs to the cytochrome c oxidase subunit 2 family.</text>
</comment>
<proteinExistence type="inferred from homology"/>
<name>COX2_EMEND</name>
<feature type="chain" id="PRO_0000183592" description="Cytochrome c oxidase subunit 2">
    <location>
        <begin position="1"/>
        <end position="252"/>
    </location>
</feature>
<feature type="topological domain" description="Mitochondrial intermembrane" evidence="2">
    <location>
        <begin position="1"/>
        <end position="39"/>
    </location>
</feature>
<feature type="transmembrane region" description="Helical" evidence="2">
    <location>
        <begin position="40"/>
        <end position="59"/>
    </location>
</feature>
<feature type="topological domain" description="Mitochondrial matrix" evidence="2">
    <location>
        <begin position="60"/>
        <end position="81"/>
    </location>
</feature>
<feature type="transmembrane region" description="Helical" evidence="2">
    <location>
        <begin position="82"/>
        <end position="105"/>
    </location>
</feature>
<feature type="topological domain" description="Mitochondrial intermembrane" evidence="2">
    <location>
        <begin position="106"/>
        <end position="252"/>
    </location>
</feature>
<feature type="binding site" evidence="1">
    <location>
        <position position="184"/>
    </location>
    <ligand>
        <name>Cu cation</name>
        <dbReference type="ChEBI" id="CHEBI:23378"/>
        <label>A1</label>
    </ligand>
</feature>
<feature type="binding site" evidence="1">
    <location>
        <position position="219"/>
    </location>
    <ligand>
        <name>Cu cation</name>
        <dbReference type="ChEBI" id="CHEBI:23378"/>
        <label>A1</label>
    </ligand>
</feature>
<feature type="binding site" evidence="1">
    <location>
        <position position="219"/>
    </location>
    <ligand>
        <name>Cu cation</name>
        <dbReference type="ChEBI" id="CHEBI:23378"/>
        <label>A2</label>
    </ligand>
</feature>
<feature type="binding site" evidence="1">
    <location>
        <position position="221"/>
    </location>
    <ligand>
        <name>Cu cation</name>
        <dbReference type="ChEBI" id="CHEBI:23378"/>
        <label>A2</label>
    </ligand>
</feature>
<feature type="binding site" evidence="1">
    <location>
        <position position="221"/>
    </location>
    <ligand>
        <name>Mg(2+)</name>
        <dbReference type="ChEBI" id="CHEBI:18420"/>
        <note>ligand shared with subunit 1</note>
    </ligand>
</feature>
<feature type="binding site" evidence="1">
    <location>
        <position position="223"/>
    </location>
    <ligand>
        <name>Cu cation</name>
        <dbReference type="ChEBI" id="CHEBI:23378"/>
        <label>A1</label>
    </ligand>
</feature>
<feature type="binding site" evidence="1">
    <location>
        <position position="223"/>
    </location>
    <ligand>
        <name>Cu cation</name>
        <dbReference type="ChEBI" id="CHEBI:23378"/>
        <label>A2</label>
    </ligand>
</feature>
<feature type="binding site" evidence="1">
    <location>
        <position position="227"/>
    </location>
    <ligand>
        <name>Cu cation</name>
        <dbReference type="ChEBI" id="CHEBI:23378"/>
        <label>A2</label>
    </ligand>
</feature>
<feature type="binding site" evidence="1">
    <location>
        <position position="230"/>
    </location>
    <ligand>
        <name>Cu cation</name>
        <dbReference type="ChEBI" id="CHEBI:23378"/>
        <label>A1</label>
    </ligand>
</feature>
<organism>
    <name type="scientific">Emericella nidulans</name>
    <name type="common">Aspergillus nidulans</name>
    <dbReference type="NCBI Taxonomy" id="162425"/>
    <lineage>
        <taxon>Eukaryota</taxon>
        <taxon>Fungi</taxon>
        <taxon>Dikarya</taxon>
        <taxon>Ascomycota</taxon>
        <taxon>Pezizomycotina</taxon>
        <taxon>Eurotiomycetes</taxon>
        <taxon>Eurotiomycetidae</taxon>
        <taxon>Eurotiales</taxon>
        <taxon>Aspergillaceae</taxon>
        <taxon>Aspergillus</taxon>
        <taxon>Aspergillus subgen. Nidulantes</taxon>
    </lineage>
</organism>
<dbReference type="EC" id="7.1.1.9"/>
<dbReference type="EMBL" id="X15441">
    <property type="protein sequence ID" value="CAA33481.1"/>
    <property type="molecule type" value="Genomic_DNA"/>
</dbReference>
<dbReference type="PIR" id="S05629">
    <property type="entry name" value="S05629"/>
</dbReference>
<dbReference type="SMR" id="P13588"/>
<dbReference type="GO" id="GO:0005743">
    <property type="term" value="C:mitochondrial inner membrane"/>
    <property type="evidence" value="ECO:0007669"/>
    <property type="project" value="UniProtKB-SubCell"/>
</dbReference>
<dbReference type="GO" id="GO:0005507">
    <property type="term" value="F:copper ion binding"/>
    <property type="evidence" value="ECO:0007669"/>
    <property type="project" value="InterPro"/>
</dbReference>
<dbReference type="GO" id="GO:0004129">
    <property type="term" value="F:cytochrome-c oxidase activity"/>
    <property type="evidence" value="ECO:0007669"/>
    <property type="project" value="UniProtKB-EC"/>
</dbReference>
<dbReference type="GO" id="GO:0042773">
    <property type="term" value="P:ATP synthesis coupled electron transport"/>
    <property type="evidence" value="ECO:0007669"/>
    <property type="project" value="TreeGrafter"/>
</dbReference>
<dbReference type="CDD" id="cd13912">
    <property type="entry name" value="CcO_II_C"/>
    <property type="match status" value="1"/>
</dbReference>
<dbReference type="FunFam" id="1.10.287.90:FF:000004">
    <property type="entry name" value="Cytochrome c oxidase subunit 2"/>
    <property type="match status" value="1"/>
</dbReference>
<dbReference type="FunFam" id="2.60.40.420:FF:000001">
    <property type="entry name" value="Cytochrome c oxidase subunit 2"/>
    <property type="match status" value="1"/>
</dbReference>
<dbReference type="Gene3D" id="1.10.287.90">
    <property type="match status" value="1"/>
</dbReference>
<dbReference type="Gene3D" id="2.60.40.420">
    <property type="entry name" value="Cupredoxins - blue copper proteins"/>
    <property type="match status" value="1"/>
</dbReference>
<dbReference type="InterPro" id="IPR045187">
    <property type="entry name" value="CcO_II"/>
</dbReference>
<dbReference type="InterPro" id="IPR002429">
    <property type="entry name" value="CcO_II-like_C"/>
</dbReference>
<dbReference type="InterPro" id="IPR034210">
    <property type="entry name" value="CcO_II_C"/>
</dbReference>
<dbReference type="InterPro" id="IPR001505">
    <property type="entry name" value="Copper_CuA"/>
</dbReference>
<dbReference type="InterPro" id="IPR008972">
    <property type="entry name" value="Cupredoxin"/>
</dbReference>
<dbReference type="InterPro" id="IPR011759">
    <property type="entry name" value="Cyt_c_oxidase_su2_TM_dom"/>
</dbReference>
<dbReference type="InterPro" id="IPR036257">
    <property type="entry name" value="Cyt_c_oxidase_su2_TM_sf"/>
</dbReference>
<dbReference type="PANTHER" id="PTHR22888:SF9">
    <property type="entry name" value="CYTOCHROME C OXIDASE SUBUNIT 2"/>
    <property type="match status" value="1"/>
</dbReference>
<dbReference type="PANTHER" id="PTHR22888">
    <property type="entry name" value="CYTOCHROME C OXIDASE, SUBUNIT II"/>
    <property type="match status" value="1"/>
</dbReference>
<dbReference type="Pfam" id="PF00116">
    <property type="entry name" value="COX2"/>
    <property type="match status" value="1"/>
</dbReference>
<dbReference type="Pfam" id="PF02790">
    <property type="entry name" value="COX2_TM"/>
    <property type="match status" value="1"/>
</dbReference>
<dbReference type="PRINTS" id="PR01166">
    <property type="entry name" value="CYCOXIDASEII"/>
</dbReference>
<dbReference type="SUPFAM" id="SSF49503">
    <property type="entry name" value="Cupredoxins"/>
    <property type="match status" value="1"/>
</dbReference>
<dbReference type="SUPFAM" id="SSF81464">
    <property type="entry name" value="Cytochrome c oxidase subunit II-like, transmembrane region"/>
    <property type="match status" value="1"/>
</dbReference>
<dbReference type="PROSITE" id="PS00078">
    <property type="entry name" value="COX2"/>
    <property type="match status" value="1"/>
</dbReference>
<dbReference type="PROSITE" id="PS50857">
    <property type="entry name" value="COX2_CUA"/>
    <property type="match status" value="1"/>
</dbReference>
<dbReference type="PROSITE" id="PS50999">
    <property type="entry name" value="COX2_TM"/>
    <property type="match status" value="1"/>
</dbReference>
<gene>
    <name type="primary">cox2</name>
    <name type="synonym">oxiB</name>
</gene>